<evidence type="ECO:0000255" key="1">
    <source>
        <dbReference type="HAMAP-Rule" id="MF_00244"/>
    </source>
</evidence>
<feature type="chain" id="PRO_0000181394" description="Probable nicotinate-nucleotide adenylyltransferase">
    <location>
        <begin position="1"/>
        <end position="194"/>
    </location>
</feature>
<proteinExistence type="inferred from homology"/>
<reference key="1">
    <citation type="journal article" date="2005" name="J. Bacteriol.">
        <title>Completion of the genome sequence of Brucella abortus and comparison to the highly similar genomes of Brucella melitensis and Brucella suis.</title>
        <authorList>
            <person name="Halling S.M."/>
            <person name="Peterson-Burch B.D."/>
            <person name="Bricker B.J."/>
            <person name="Zuerner R.L."/>
            <person name="Qing Z."/>
            <person name="Li L.-L."/>
            <person name="Kapur V."/>
            <person name="Alt D.P."/>
            <person name="Olsen S.C."/>
        </authorList>
    </citation>
    <scope>NUCLEOTIDE SEQUENCE [LARGE SCALE GENOMIC DNA]</scope>
    <source>
        <strain>9-941</strain>
    </source>
</reference>
<sequence length="194" mass="21977">MTVGLFGGSFNPPHGGHALVAEIAIRRLKLDQLWWMVTPGNPLKDSRELAPLSERLRLSEEVAEDPRIKVTALEAAFHVRYTADTLALIRNANPDVYFVWVMGADNLASFHRWQRWREIAQNFPIAIIDRPGSTLSYLSSRMAQTFSDSRLDERYAPVLARRMPPAWTFIHGPRSSLSSTALRKVQLKKAPSKK</sequence>
<accession>Q57B48</accession>
<keyword id="KW-0067">ATP-binding</keyword>
<keyword id="KW-0520">NAD</keyword>
<keyword id="KW-0547">Nucleotide-binding</keyword>
<keyword id="KW-0548">Nucleotidyltransferase</keyword>
<keyword id="KW-0662">Pyridine nucleotide biosynthesis</keyword>
<keyword id="KW-0808">Transferase</keyword>
<comment type="function">
    <text evidence="1">Catalyzes the reversible adenylation of nicotinate mononucleotide (NaMN) to nicotinic acid adenine dinucleotide (NaAD).</text>
</comment>
<comment type="catalytic activity">
    <reaction evidence="1">
        <text>nicotinate beta-D-ribonucleotide + ATP + H(+) = deamido-NAD(+) + diphosphate</text>
        <dbReference type="Rhea" id="RHEA:22860"/>
        <dbReference type="ChEBI" id="CHEBI:15378"/>
        <dbReference type="ChEBI" id="CHEBI:30616"/>
        <dbReference type="ChEBI" id="CHEBI:33019"/>
        <dbReference type="ChEBI" id="CHEBI:57502"/>
        <dbReference type="ChEBI" id="CHEBI:58437"/>
        <dbReference type="EC" id="2.7.7.18"/>
    </reaction>
</comment>
<comment type="pathway">
    <text evidence="1">Cofactor biosynthesis; NAD(+) biosynthesis; deamido-NAD(+) from nicotinate D-ribonucleotide: step 1/1.</text>
</comment>
<comment type="similarity">
    <text evidence="1">Belongs to the NadD family.</text>
</comment>
<dbReference type="EC" id="2.7.7.18" evidence="1"/>
<dbReference type="EMBL" id="AE017223">
    <property type="protein sequence ID" value="AAX75136.1"/>
    <property type="molecule type" value="Genomic_DNA"/>
</dbReference>
<dbReference type="SMR" id="Q57B48"/>
<dbReference type="EnsemblBacteria" id="AAX75136">
    <property type="protein sequence ID" value="AAX75136"/>
    <property type="gene ID" value="BruAb1_1821"/>
</dbReference>
<dbReference type="KEGG" id="bmb:BruAb1_1821"/>
<dbReference type="HOGENOM" id="CLU_069765_2_0_5"/>
<dbReference type="UniPathway" id="UPA00253">
    <property type="reaction ID" value="UER00332"/>
</dbReference>
<dbReference type="Proteomes" id="UP000000540">
    <property type="component" value="Chromosome I"/>
</dbReference>
<dbReference type="GO" id="GO:0005524">
    <property type="term" value="F:ATP binding"/>
    <property type="evidence" value="ECO:0007669"/>
    <property type="project" value="UniProtKB-KW"/>
</dbReference>
<dbReference type="GO" id="GO:0004515">
    <property type="term" value="F:nicotinate-nucleotide adenylyltransferase activity"/>
    <property type="evidence" value="ECO:0007669"/>
    <property type="project" value="UniProtKB-UniRule"/>
</dbReference>
<dbReference type="GO" id="GO:0009435">
    <property type="term" value="P:NAD biosynthetic process"/>
    <property type="evidence" value="ECO:0007669"/>
    <property type="project" value="UniProtKB-UniRule"/>
</dbReference>
<dbReference type="CDD" id="cd02165">
    <property type="entry name" value="NMNAT"/>
    <property type="match status" value="1"/>
</dbReference>
<dbReference type="Gene3D" id="3.40.50.620">
    <property type="entry name" value="HUPs"/>
    <property type="match status" value="1"/>
</dbReference>
<dbReference type="HAMAP" id="MF_00244">
    <property type="entry name" value="NaMN_adenylyltr"/>
    <property type="match status" value="1"/>
</dbReference>
<dbReference type="InterPro" id="IPR004821">
    <property type="entry name" value="Cyt_trans-like"/>
</dbReference>
<dbReference type="InterPro" id="IPR005248">
    <property type="entry name" value="NadD/NMNAT"/>
</dbReference>
<dbReference type="InterPro" id="IPR014729">
    <property type="entry name" value="Rossmann-like_a/b/a_fold"/>
</dbReference>
<dbReference type="NCBIfam" id="TIGR00482">
    <property type="entry name" value="nicotinate (nicotinamide) nucleotide adenylyltransferase"/>
    <property type="match status" value="1"/>
</dbReference>
<dbReference type="NCBIfam" id="NF000843">
    <property type="entry name" value="PRK00071.2-2"/>
    <property type="match status" value="1"/>
</dbReference>
<dbReference type="NCBIfam" id="NF000845">
    <property type="entry name" value="PRK00071.2-4"/>
    <property type="match status" value="1"/>
</dbReference>
<dbReference type="PANTHER" id="PTHR39321">
    <property type="entry name" value="NICOTINATE-NUCLEOTIDE ADENYLYLTRANSFERASE-RELATED"/>
    <property type="match status" value="1"/>
</dbReference>
<dbReference type="PANTHER" id="PTHR39321:SF3">
    <property type="entry name" value="PHOSPHOPANTETHEINE ADENYLYLTRANSFERASE"/>
    <property type="match status" value="1"/>
</dbReference>
<dbReference type="Pfam" id="PF01467">
    <property type="entry name" value="CTP_transf_like"/>
    <property type="match status" value="1"/>
</dbReference>
<dbReference type="SUPFAM" id="SSF52374">
    <property type="entry name" value="Nucleotidylyl transferase"/>
    <property type="match status" value="1"/>
</dbReference>
<protein>
    <recommendedName>
        <fullName evidence="1">Probable nicotinate-nucleotide adenylyltransferase</fullName>
        <ecNumber evidence="1">2.7.7.18</ecNumber>
    </recommendedName>
    <alternativeName>
        <fullName evidence="1">Deamido-NAD(+) diphosphorylase</fullName>
    </alternativeName>
    <alternativeName>
        <fullName evidence="1">Deamido-NAD(+) pyrophosphorylase</fullName>
    </alternativeName>
    <alternativeName>
        <fullName evidence="1">Nicotinate mononucleotide adenylyltransferase</fullName>
        <shortName evidence="1">NaMN adenylyltransferase</shortName>
    </alternativeName>
</protein>
<organism>
    <name type="scientific">Brucella abortus biovar 1 (strain 9-941)</name>
    <dbReference type="NCBI Taxonomy" id="262698"/>
    <lineage>
        <taxon>Bacteria</taxon>
        <taxon>Pseudomonadati</taxon>
        <taxon>Pseudomonadota</taxon>
        <taxon>Alphaproteobacteria</taxon>
        <taxon>Hyphomicrobiales</taxon>
        <taxon>Brucellaceae</taxon>
        <taxon>Brucella/Ochrobactrum group</taxon>
        <taxon>Brucella</taxon>
    </lineage>
</organism>
<name>NADD_BRUAB</name>
<gene>
    <name evidence="1" type="primary">nadD</name>
    <name type="ordered locus">BruAb1_1821</name>
</gene>